<protein>
    <recommendedName>
        <fullName evidence="1">Isoleucine--tRNA ligase</fullName>
        <ecNumber evidence="1">6.1.1.5</ecNumber>
    </recommendedName>
    <alternativeName>
        <fullName evidence="1">Isoleucyl-tRNA synthetase</fullName>
        <shortName evidence="1">IleRS</shortName>
    </alternativeName>
</protein>
<name>SYI_BACLD</name>
<comment type="function">
    <text evidence="1">Catalyzes the attachment of isoleucine to tRNA(Ile). As IleRS can inadvertently accommodate and process structurally similar amino acids such as valine, to avoid such errors it has two additional distinct tRNA(Ile)-dependent editing activities. One activity is designated as 'pretransfer' editing and involves the hydrolysis of activated Val-AMP. The other activity is designated 'posttransfer' editing and involves deacylation of mischarged Val-tRNA(Ile).</text>
</comment>
<comment type="catalytic activity">
    <reaction evidence="1">
        <text>tRNA(Ile) + L-isoleucine + ATP = L-isoleucyl-tRNA(Ile) + AMP + diphosphate</text>
        <dbReference type="Rhea" id="RHEA:11060"/>
        <dbReference type="Rhea" id="RHEA-COMP:9666"/>
        <dbReference type="Rhea" id="RHEA-COMP:9695"/>
        <dbReference type="ChEBI" id="CHEBI:30616"/>
        <dbReference type="ChEBI" id="CHEBI:33019"/>
        <dbReference type="ChEBI" id="CHEBI:58045"/>
        <dbReference type="ChEBI" id="CHEBI:78442"/>
        <dbReference type="ChEBI" id="CHEBI:78528"/>
        <dbReference type="ChEBI" id="CHEBI:456215"/>
        <dbReference type="EC" id="6.1.1.5"/>
    </reaction>
</comment>
<comment type="cofactor">
    <cofactor evidence="1">
        <name>Zn(2+)</name>
        <dbReference type="ChEBI" id="CHEBI:29105"/>
    </cofactor>
    <text evidence="1">Binds 1 zinc ion per subunit.</text>
</comment>
<comment type="subunit">
    <text evidence="1">Monomer.</text>
</comment>
<comment type="subcellular location">
    <subcellularLocation>
        <location evidence="1">Cytoplasm</location>
    </subcellularLocation>
</comment>
<comment type="domain">
    <text evidence="1">IleRS has two distinct active sites: one for aminoacylation and one for editing. The misactivated valine is translocated from the active site to the editing site, which sterically excludes the correctly activated isoleucine. The single editing site contains two valyl binding pockets, one specific for each substrate (Val-AMP or Val-tRNA(Ile)).</text>
</comment>
<comment type="similarity">
    <text evidence="1">Belongs to the class-I aminoacyl-tRNA synthetase family. IleS type 1 subfamily.</text>
</comment>
<sequence>MDYKDTLLMPKTDFPMRGNLPNREPEIQGKWEDMDIYSLVQKRTEGRPMFVLHDGPPYANGDIHMGHALNKVLKDFIVRSRSMSGYHAPYVPGWDTHGLPIETALTKNKKVKRKEMTVAEFRKLCEEYAWQQIEGQKAQFKRLGVRGDWENPYVTLKPEFEAQQIKVFGEMAKKGYIYKGKKPVYWSPSSESALAEAEIEYHDKRSPSIYVAFDVKDGKGVLTNGEKIVIWTTTPWTIPANLGIAVHPELEYSVVAAGGARYVMASALIESVAKAIGFEDHEVVQTVKGKDLEHIVAVHPLYGRDSLVMLGEHVTTDAGTGCVHTAPGHGEDDFIIGQKYGLDVLCPVDEKGHMTSEAPGFEGLFYDQANKPITEQLEEKGALLKLDFITHSYPHDWRTKKPTIFRATAQWFASIKDFRDELLEAVKKTKWVPEWGETRLYNMIRDRGDWCISRQRAWGVPIPVFYAENGEPIITDETINHVSELFREHGSNIWFEKEANELLPEGFTHPGSPNGKFTKEQDIMDVWFDSGSSHQAVLEEREDLVRPADLYLEGSDQYRGWFNSSISTAVAVTGKAPYKGVLSHGFALDGEGRKMSKSLGNVVVPAKIMNQFGADILRLWVASVDYQADVRVSDAILKQVAEVYRKIRNTFRFLHGNIADFDPAKDAIAVEDLREVDQYILIKLNSLIEKVKKAYEEYDFAVIYHAVHNFCAIELSSFYMDFAKDVVYIEHADHKDRRSMQTVFYETLLALVKLIAPILPHTADEMWSHFTFVSEKSVQLTDMPETRDIPNAKETEEKFDSFMKLRDDVLKALETARNEKIIGKSSVASLTLYPNEEAKALLSSIKEDVKQLFIVSELAIGGTEADAPEDAQSFETGKIVVAQAEGETCERCRMVSKEIGEDPDHPELCPRCAGIVKTYYQN</sequence>
<reference key="1">
    <citation type="journal article" date="2004" name="J. Mol. Microbiol. Biotechnol.">
        <title>The complete genome sequence of Bacillus licheniformis DSM13, an organism with great industrial potential.</title>
        <authorList>
            <person name="Veith B."/>
            <person name="Herzberg C."/>
            <person name="Steckel S."/>
            <person name="Feesche J."/>
            <person name="Maurer K.H."/>
            <person name="Ehrenreich P."/>
            <person name="Baeumer S."/>
            <person name="Henne A."/>
            <person name="Liesegang H."/>
            <person name="Merkl R."/>
            <person name="Ehrenreich A."/>
            <person name="Gottschalk G."/>
        </authorList>
    </citation>
    <scope>NUCLEOTIDE SEQUENCE [LARGE SCALE GENOMIC DNA]</scope>
    <source>
        <strain>ATCC 14580 / DSM 13 / JCM 2505 / CCUG 7422 / NBRC 12200 / NCIMB 9375 / NCTC 10341 / NRRL NRS-1264 / Gibson 46</strain>
    </source>
</reference>
<reference key="2">
    <citation type="journal article" date="2004" name="Genome Biol.">
        <title>Complete genome sequence of the industrial bacterium Bacillus licheniformis and comparisons with closely related Bacillus species.</title>
        <authorList>
            <person name="Rey M.W."/>
            <person name="Ramaiya P."/>
            <person name="Nelson B.A."/>
            <person name="Brody-Karpin S.D."/>
            <person name="Zaretsky E.J."/>
            <person name="Tang M."/>
            <person name="Lopez de Leon A."/>
            <person name="Xiang H."/>
            <person name="Gusti V."/>
            <person name="Clausen I.G."/>
            <person name="Olsen P.B."/>
            <person name="Rasmussen M.D."/>
            <person name="Andersen J.T."/>
            <person name="Joergensen P.L."/>
            <person name="Larsen T.S."/>
            <person name="Sorokin A."/>
            <person name="Bolotin A."/>
            <person name="Lapidus A."/>
            <person name="Galleron N."/>
            <person name="Ehrlich S.D."/>
            <person name="Berka R.M."/>
        </authorList>
    </citation>
    <scope>NUCLEOTIDE SEQUENCE [LARGE SCALE GENOMIC DNA]</scope>
    <source>
        <strain>ATCC 14580 / DSM 13 / JCM 2505 / CCUG 7422 / NBRC 12200 / NCIMB 9375 / NCTC 10341 / NRRL NRS-1264 / Gibson 46</strain>
    </source>
</reference>
<keyword id="KW-0030">Aminoacyl-tRNA synthetase</keyword>
<keyword id="KW-0067">ATP-binding</keyword>
<keyword id="KW-0963">Cytoplasm</keyword>
<keyword id="KW-0436">Ligase</keyword>
<keyword id="KW-0479">Metal-binding</keyword>
<keyword id="KW-0547">Nucleotide-binding</keyword>
<keyword id="KW-0648">Protein biosynthesis</keyword>
<keyword id="KW-1185">Reference proteome</keyword>
<keyword id="KW-0862">Zinc</keyword>
<accession>Q65JV7</accession>
<accession>Q62VB1</accession>
<feature type="chain" id="PRO_0000098350" description="Isoleucine--tRNA ligase">
    <location>
        <begin position="1"/>
        <end position="922"/>
    </location>
</feature>
<feature type="short sequence motif" description="'HIGH' region">
    <location>
        <begin position="57"/>
        <end position="67"/>
    </location>
</feature>
<feature type="short sequence motif" description="'KMSKS' region">
    <location>
        <begin position="594"/>
        <end position="598"/>
    </location>
</feature>
<feature type="binding site" evidence="1">
    <location>
        <position position="553"/>
    </location>
    <ligand>
        <name>L-isoleucyl-5'-AMP</name>
        <dbReference type="ChEBI" id="CHEBI:178002"/>
    </ligand>
</feature>
<feature type="binding site" evidence="1">
    <location>
        <position position="597"/>
    </location>
    <ligand>
        <name>ATP</name>
        <dbReference type="ChEBI" id="CHEBI:30616"/>
    </ligand>
</feature>
<feature type="binding site" evidence="1">
    <location>
        <position position="889"/>
    </location>
    <ligand>
        <name>Zn(2+)</name>
        <dbReference type="ChEBI" id="CHEBI:29105"/>
    </ligand>
</feature>
<feature type="binding site" evidence="1">
    <location>
        <position position="892"/>
    </location>
    <ligand>
        <name>Zn(2+)</name>
        <dbReference type="ChEBI" id="CHEBI:29105"/>
    </ligand>
</feature>
<feature type="binding site" evidence="1">
    <location>
        <position position="909"/>
    </location>
    <ligand>
        <name>Zn(2+)</name>
        <dbReference type="ChEBI" id="CHEBI:29105"/>
    </ligand>
</feature>
<feature type="binding site" evidence="1">
    <location>
        <position position="912"/>
    </location>
    <ligand>
        <name>Zn(2+)</name>
        <dbReference type="ChEBI" id="CHEBI:29105"/>
    </ligand>
</feature>
<gene>
    <name evidence="1" type="primary">ileS</name>
    <name type="ordered locus">BLi01762</name>
    <name type="ordered locus">BL02267</name>
</gene>
<proteinExistence type="inferred from homology"/>
<organism>
    <name type="scientific">Bacillus licheniformis (strain ATCC 14580 / DSM 13 / JCM 2505 / CCUG 7422 / NBRC 12200 / NCIMB 9375 / NCTC 10341 / NRRL NRS-1264 / Gibson 46)</name>
    <dbReference type="NCBI Taxonomy" id="279010"/>
    <lineage>
        <taxon>Bacteria</taxon>
        <taxon>Bacillati</taxon>
        <taxon>Bacillota</taxon>
        <taxon>Bacilli</taxon>
        <taxon>Bacillales</taxon>
        <taxon>Bacillaceae</taxon>
        <taxon>Bacillus</taxon>
    </lineage>
</organism>
<dbReference type="EC" id="6.1.1.5" evidence="1"/>
<dbReference type="EMBL" id="AE017333">
    <property type="protein sequence ID" value="AAU40657.1"/>
    <property type="molecule type" value="Genomic_DNA"/>
</dbReference>
<dbReference type="EMBL" id="CP000002">
    <property type="protein sequence ID" value="AAU23298.1"/>
    <property type="molecule type" value="Genomic_DNA"/>
</dbReference>
<dbReference type="RefSeq" id="WP_009328543.1">
    <property type="nucleotide sequence ID" value="NC_006322.1"/>
</dbReference>
<dbReference type="SMR" id="Q65JV7"/>
<dbReference type="STRING" id="279010.BL02267"/>
<dbReference type="GeneID" id="92861644"/>
<dbReference type="KEGG" id="bld:BLi01762"/>
<dbReference type="KEGG" id="bli:BL02267"/>
<dbReference type="eggNOG" id="COG0060">
    <property type="taxonomic scope" value="Bacteria"/>
</dbReference>
<dbReference type="HOGENOM" id="CLU_001493_7_1_9"/>
<dbReference type="Proteomes" id="UP000000606">
    <property type="component" value="Chromosome"/>
</dbReference>
<dbReference type="GO" id="GO:0005829">
    <property type="term" value="C:cytosol"/>
    <property type="evidence" value="ECO:0007669"/>
    <property type="project" value="TreeGrafter"/>
</dbReference>
<dbReference type="GO" id="GO:0002161">
    <property type="term" value="F:aminoacyl-tRNA deacylase activity"/>
    <property type="evidence" value="ECO:0007669"/>
    <property type="project" value="InterPro"/>
</dbReference>
<dbReference type="GO" id="GO:0005524">
    <property type="term" value="F:ATP binding"/>
    <property type="evidence" value="ECO:0007669"/>
    <property type="project" value="UniProtKB-UniRule"/>
</dbReference>
<dbReference type="GO" id="GO:0004822">
    <property type="term" value="F:isoleucine-tRNA ligase activity"/>
    <property type="evidence" value="ECO:0007669"/>
    <property type="project" value="UniProtKB-UniRule"/>
</dbReference>
<dbReference type="GO" id="GO:0000049">
    <property type="term" value="F:tRNA binding"/>
    <property type="evidence" value="ECO:0007669"/>
    <property type="project" value="InterPro"/>
</dbReference>
<dbReference type="GO" id="GO:0008270">
    <property type="term" value="F:zinc ion binding"/>
    <property type="evidence" value="ECO:0007669"/>
    <property type="project" value="UniProtKB-UniRule"/>
</dbReference>
<dbReference type="GO" id="GO:0006428">
    <property type="term" value="P:isoleucyl-tRNA aminoacylation"/>
    <property type="evidence" value="ECO:0007669"/>
    <property type="project" value="UniProtKB-UniRule"/>
</dbReference>
<dbReference type="CDD" id="cd07960">
    <property type="entry name" value="Anticodon_Ia_Ile_BEm"/>
    <property type="match status" value="1"/>
</dbReference>
<dbReference type="CDD" id="cd00818">
    <property type="entry name" value="IleRS_core"/>
    <property type="match status" value="1"/>
</dbReference>
<dbReference type="FunFam" id="1.10.10.830:FF:000001">
    <property type="entry name" value="Isoleucine--tRNA ligase"/>
    <property type="match status" value="1"/>
</dbReference>
<dbReference type="FunFam" id="1.10.730.20:FF:000001">
    <property type="entry name" value="Isoleucine--tRNA ligase"/>
    <property type="match status" value="1"/>
</dbReference>
<dbReference type="FunFam" id="3.40.50.620:FF:000152">
    <property type="entry name" value="Isoleucine--tRNA ligase"/>
    <property type="match status" value="1"/>
</dbReference>
<dbReference type="FunFam" id="3.90.740.10:FF:000006">
    <property type="entry name" value="Isoleucine--tRNA ligase"/>
    <property type="match status" value="1"/>
</dbReference>
<dbReference type="Gene3D" id="1.10.730.20">
    <property type="match status" value="1"/>
</dbReference>
<dbReference type="Gene3D" id="3.40.50.620">
    <property type="entry name" value="HUPs"/>
    <property type="match status" value="2"/>
</dbReference>
<dbReference type="Gene3D" id="1.10.10.830">
    <property type="entry name" value="Ile-tRNA synthetase CP2 domain-like"/>
    <property type="match status" value="1"/>
</dbReference>
<dbReference type="Gene3D" id="3.90.740.10">
    <property type="entry name" value="Valyl/Leucyl/Isoleucyl-tRNA synthetase, editing domain"/>
    <property type="match status" value="1"/>
</dbReference>
<dbReference type="HAMAP" id="MF_02002">
    <property type="entry name" value="Ile_tRNA_synth_type1"/>
    <property type="match status" value="1"/>
</dbReference>
<dbReference type="InterPro" id="IPR001412">
    <property type="entry name" value="aa-tRNA-synth_I_CS"/>
</dbReference>
<dbReference type="InterPro" id="IPR002300">
    <property type="entry name" value="aa-tRNA-synth_Ia"/>
</dbReference>
<dbReference type="InterPro" id="IPR033708">
    <property type="entry name" value="Anticodon_Ile_BEm"/>
</dbReference>
<dbReference type="InterPro" id="IPR002301">
    <property type="entry name" value="Ile-tRNA-ligase"/>
</dbReference>
<dbReference type="InterPro" id="IPR023585">
    <property type="entry name" value="Ile-tRNA-ligase_type1"/>
</dbReference>
<dbReference type="InterPro" id="IPR050081">
    <property type="entry name" value="Ile-tRNA_ligase"/>
</dbReference>
<dbReference type="InterPro" id="IPR013155">
    <property type="entry name" value="M/V/L/I-tRNA-synth_anticd-bd"/>
</dbReference>
<dbReference type="InterPro" id="IPR014729">
    <property type="entry name" value="Rossmann-like_a/b/a_fold"/>
</dbReference>
<dbReference type="InterPro" id="IPR009080">
    <property type="entry name" value="tRNAsynth_Ia_anticodon-bd"/>
</dbReference>
<dbReference type="InterPro" id="IPR009008">
    <property type="entry name" value="Val/Leu/Ile-tRNA-synth_edit"/>
</dbReference>
<dbReference type="InterPro" id="IPR010663">
    <property type="entry name" value="Znf_FPG/IleRS"/>
</dbReference>
<dbReference type="NCBIfam" id="TIGR00392">
    <property type="entry name" value="ileS"/>
    <property type="match status" value="1"/>
</dbReference>
<dbReference type="PANTHER" id="PTHR42765:SF1">
    <property type="entry name" value="ISOLEUCINE--TRNA LIGASE, MITOCHONDRIAL"/>
    <property type="match status" value="1"/>
</dbReference>
<dbReference type="PANTHER" id="PTHR42765">
    <property type="entry name" value="SOLEUCYL-TRNA SYNTHETASE"/>
    <property type="match status" value="1"/>
</dbReference>
<dbReference type="Pfam" id="PF08264">
    <property type="entry name" value="Anticodon_1"/>
    <property type="match status" value="1"/>
</dbReference>
<dbReference type="Pfam" id="PF00133">
    <property type="entry name" value="tRNA-synt_1"/>
    <property type="match status" value="1"/>
</dbReference>
<dbReference type="Pfam" id="PF06827">
    <property type="entry name" value="zf-FPG_IleRS"/>
    <property type="match status" value="1"/>
</dbReference>
<dbReference type="PRINTS" id="PR00984">
    <property type="entry name" value="TRNASYNTHILE"/>
</dbReference>
<dbReference type="SUPFAM" id="SSF47323">
    <property type="entry name" value="Anticodon-binding domain of a subclass of class I aminoacyl-tRNA synthetases"/>
    <property type="match status" value="1"/>
</dbReference>
<dbReference type="SUPFAM" id="SSF52374">
    <property type="entry name" value="Nucleotidylyl transferase"/>
    <property type="match status" value="1"/>
</dbReference>
<dbReference type="SUPFAM" id="SSF50677">
    <property type="entry name" value="ValRS/IleRS/LeuRS editing domain"/>
    <property type="match status" value="1"/>
</dbReference>
<dbReference type="PROSITE" id="PS00178">
    <property type="entry name" value="AA_TRNA_LIGASE_I"/>
    <property type="match status" value="1"/>
</dbReference>
<evidence type="ECO:0000255" key="1">
    <source>
        <dbReference type="HAMAP-Rule" id="MF_02002"/>
    </source>
</evidence>